<accession>P10432</accession>
<sequence>MERSHVKRLPQLGHNIFAWKINIDEVSLLLKFCRSCNIFWSCSNSFFDM</sequence>
<name>YIM9_BPPH1</name>
<protein>
    <recommendedName>
        <fullName>Uncharacterized immunity region protein 9</fullName>
    </recommendedName>
</protein>
<dbReference type="EMBL" id="M11920">
    <property type="status" value="NOT_ANNOTATED_CDS"/>
    <property type="molecule type" value="Genomic_DNA"/>
</dbReference>
<dbReference type="PIR" id="H24521">
    <property type="entry name" value="IMBP9"/>
</dbReference>
<reference key="1">
    <citation type="journal article" date="1985" name="Gene">
        <title>Nucleotide sequence of the immunity region of Bacillus subtilis bacteriophage phi 105: identification of the repressor gene and its mRNA and protein products.</title>
        <authorList>
            <person name="Cully D.F."/>
            <person name="Garro A.J."/>
        </authorList>
    </citation>
    <scope>NUCLEOTIDE SEQUENCE [GENOMIC DNA]</scope>
</reference>
<feature type="chain" id="PRO_0000077726" description="Uncharacterized immunity region protein 9">
    <location>
        <begin position="1"/>
        <end position="49"/>
    </location>
</feature>
<organismHost>
    <name type="scientific">Bacillus subtilis</name>
    <dbReference type="NCBI Taxonomy" id="1423"/>
</organismHost>
<proteinExistence type="predicted"/>
<organism>
    <name type="scientific">Bacillus phage phi105</name>
    <name type="common">Bacteriophage phi-105</name>
    <dbReference type="NCBI Taxonomy" id="10717"/>
    <lineage>
        <taxon>Viruses</taxon>
        <taxon>Duplodnaviria</taxon>
        <taxon>Heunggongvirae</taxon>
        <taxon>Uroviricota</taxon>
        <taxon>Caudoviricetes</taxon>
        <taxon>Spizizenvirus</taxon>
        <taxon>Spizizenvirus sv105</taxon>
    </lineage>
</organism>